<geneLocation type="chloroplast"/>
<feature type="chain" id="PRO_0000117846" description="NAD(P)H-quinone oxidoreductase subunit 3, chloroplastic">
    <location>
        <begin position="1"/>
        <end position="120"/>
    </location>
</feature>
<feature type="transmembrane region" description="Helical" evidence="1">
    <location>
        <begin position="9"/>
        <end position="29"/>
    </location>
</feature>
<feature type="transmembrane region" description="Helical" evidence="1">
    <location>
        <begin position="64"/>
        <end position="84"/>
    </location>
</feature>
<feature type="transmembrane region" description="Helical" evidence="1">
    <location>
        <begin position="88"/>
        <end position="108"/>
    </location>
</feature>
<organism>
    <name type="scientific">Lupinus luteus</name>
    <name type="common">European yellow lupine</name>
    <dbReference type="NCBI Taxonomy" id="3873"/>
    <lineage>
        <taxon>Eukaryota</taxon>
        <taxon>Viridiplantae</taxon>
        <taxon>Streptophyta</taxon>
        <taxon>Embryophyta</taxon>
        <taxon>Tracheophyta</taxon>
        <taxon>Spermatophyta</taxon>
        <taxon>Magnoliopsida</taxon>
        <taxon>eudicotyledons</taxon>
        <taxon>Gunneridae</taxon>
        <taxon>Pentapetalae</taxon>
        <taxon>rosids</taxon>
        <taxon>fabids</taxon>
        <taxon>Fabales</taxon>
        <taxon>Fabaceae</taxon>
        <taxon>Papilionoideae</taxon>
        <taxon>50 kb inversion clade</taxon>
        <taxon>genistoids sensu lato</taxon>
        <taxon>core genistoids</taxon>
        <taxon>Genisteae</taxon>
        <taxon>Lupinus</taxon>
    </lineage>
</organism>
<keyword id="KW-0150">Chloroplast</keyword>
<keyword id="KW-0472">Membrane</keyword>
<keyword id="KW-0520">NAD</keyword>
<keyword id="KW-0521">NADP</keyword>
<keyword id="KW-0934">Plastid</keyword>
<keyword id="KW-0618">Plastoquinone</keyword>
<keyword id="KW-0874">Quinone</keyword>
<keyword id="KW-0793">Thylakoid</keyword>
<keyword id="KW-1278">Translocase</keyword>
<keyword id="KW-0812">Transmembrane</keyword>
<keyword id="KW-1133">Transmembrane helix</keyword>
<keyword id="KW-0813">Transport</keyword>
<accession>P52765</accession>
<protein>
    <recommendedName>
        <fullName evidence="1">NAD(P)H-quinone oxidoreductase subunit 3, chloroplastic</fullName>
        <ecNumber evidence="1">7.1.1.-</ecNumber>
    </recommendedName>
    <alternativeName>
        <fullName evidence="1">NAD(P)H dehydrogenase subunit 3</fullName>
    </alternativeName>
    <alternativeName>
        <fullName evidence="1">NADH-plastoquinone oxidoreductase subunit 3</fullName>
    </alternativeName>
</protein>
<comment type="function">
    <text evidence="1">NDH shuttles electrons from NAD(P)H:plastoquinone, via FMN and iron-sulfur (Fe-S) centers, to quinones in the photosynthetic chain and possibly in a chloroplast respiratory chain. The immediate electron acceptor for the enzyme in this species is believed to be plastoquinone. Couples the redox reaction to proton translocation, and thus conserves the redox energy in a proton gradient.</text>
</comment>
<comment type="catalytic activity">
    <reaction evidence="1">
        <text>a plastoquinone + NADH + (n+1) H(+)(in) = a plastoquinol + NAD(+) + n H(+)(out)</text>
        <dbReference type="Rhea" id="RHEA:42608"/>
        <dbReference type="Rhea" id="RHEA-COMP:9561"/>
        <dbReference type="Rhea" id="RHEA-COMP:9562"/>
        <dbReference type="ChEBI" id="CHEBI:15378"/>
        <dbReference type="ChEBI" id="CHEBI:17757"/>
        <dbReference type="ChEBI" id="CHEBI:57540"/>
        <dbReference type="ChEBI" id="CHEBI:57945"/>
        <dbReference type="ChEBI" id="CHEBI:62192"/>
    </reaction>
</comment>
<comment type="catalytic activity">
    <reaction evidence="1">
        <text>a plastoquinone + NADPH + (n+1) H(+)(in) = a plastoquinol + NADP(+) + n H(+)(out)</text>
        <dbReference type="Rhea" id="RHEA:42612"/>
        <dbReference type="Rhea" id="RHEA-COMP:9561"/>
        <dbReference type="Rhea" id="RHEA-COMP:9562"/>
        <dbReference type="ChEBI" id="CHEBI:15378"/>
        <dbReference type="ChEBI" id="CHEBI:17757"/>
        <dbReference type="ChEBI" id="CHEBI:57783"/>
        <dbReference type="ChEBI" id="CHEBI:58349"/>
        <dbReference type="ChEBI" id="CHEBI:62192"/>
    </reaction>
</comment>
<comment type="subunit">
    <text evidence="1">NDH is composed of at least 16 different subunits, 5 of which are encoded in the nucleus.</text>
</comment>
<comment type="subcellular location">
    <subcellularLocation>
        <location evidence="1">Plastid</location>
        <location evidence="1">Chloroplast thylakoid membrane</location>
        <topology evidence="1">Multi-pass membrane protein</topology>
    </subcellularLocation>
</comment>
<comment type="similarity">
    <text evidence="1">Belongs to the complex I subunit 3 family.</text>
</comment>
<gene>
    <name evidence="1" type="primary">ndhC</name>
</gene>
<proteinExistence type="inferred from homology"/>
<name>NU3C_LUPLU</name>
<evidence type="ECO:0000255" key="1">
    <source>
        <dbReference type="HAMAP-Rule" id="MF_01394"/>
    </source>
</evidence>
<dbReference type="EC" id="7.1.1.-" evidence="1"/>
<dbReference type="EMBL" id="U27653">
    <property type="protein sequence ID" value="AAB86905.1"/>
    <property type="molecule type" value="Genomic_DNA"/>
</dbReference>
<dbReference type="RefSeq" id="YP_008963586.1">
    <property type="nucleotide sequence ID" value="NC_023090.1"/>
</dbReference>
<dbReference type="SMR" id="P52765"/>
<dbReference type="GeneID" id="17961049"/>
<dbReference type="GO" id="GO:0009535">
    <property type="term" value="C:chloroplast thylakoid membrane"/>
    <property type="evidence" value="ECO:0007669"/>
    <property type="project" value="UniProtKB-SubCell"/>
</dbReference>
<dbReference type="GO" id="GO:0030964">
    <property type="term" value="C:NADH dehydrogenase complex"/>
    <property type="evidence" value="ECO:0007669"/>
    <property type="project" value="TreeGrafter"/>
</dbReference>
<dbReference type="GO" id="GO:0008137">
    <property type="term" value="F:NADH dehydrogenase (ubiquinone) activity"/>
    <property type="evidence" value="ECO:0007669"/>
    <property type="project" value="InterPro"/>
</dbReference>
<dbReference type="GO" id="GO:0048038">
    <property type="term" value="F:quinone binding"/>
    <property type="evidence" value="ECO:0007669"/>
    <property type="project" value="UniProtKB-KW"/>
</dbReference>
<dbReference type="GO" id="GO:0019684">
    <property type="term" value="P:photosynthesis, light reaction"/>
    <property type="evidence" value="ECO:0007669"/>
    <property type="project" value="UniProtKB-UniRule"/>
</dbReference>
<dbReference type="FunFam" id="1.20.58.1610:FF:000001">
    <property type="entry name" value="NAD(P)H-quinone oxidoreductase subunit 3, chloroplastic"/>
    <property type="match status" value="1"/>
</dbReference>
<dbReference type="Gene3D" id="1.20.58.1610">
    <property type="entry name" value="NADH:ubiquinone/plastoquinone oxidoreductase, chain 3"/>
    <property type="match status" value="1"/>
</dbReference>
<dbReference type="HAMAP" id="MF_01394">
    <property type="entry name" value="NDH1_NuoA"/>
    <property type="match status" value="1"/>
</dbReference>
<dbReference type="InterPro" id="IPR023043">
    <property type="entry name" value="NAD(P)H_OxRDtase_bac/plastid"/>
</dbReference>
<dbReference type="InterPro" id="IPR000440">
    <property type="entry name" value="NADH_UbQ/plastoQ_OxRdtase_su3"/>
</dbReference>
<dbReference type="InterPro" id="IPR038430">
    <property type="entry name" value="NDAH_ubi_oxred_su3_sf"/>
</dbReference>
<dbReference type="PANTHER" id="PTHR11058">
    <property type="entry name" value="NADH-UBIQUINONE OXIDOREDUCTASE CHAIN 3"/>
    <property type="match status" value="1"/>
</dbReference>
<dbReference type="PANTHER" id="PTHR11058:SF9">
    <property type="entry name" value="NADH-UBIQUINONE OXIDOREDUCTASE CHAIN 3"/>
    <property type="match status" value="1"/>
</dbReference>
<dbReference type="Pfam" id="PF00507">
    <property type="entry name" value="Oxidored_q4"/>
    <property type="match status" value="1"/>
</dbReference>
<sequence length="120" mass="13823">MFLLYEYDIFWAFLIISSLIPILAFLISGILAPISKGPEKLSSYESGIEPMGDAWLQFRIRYYMFALVFVVFDVETVFLYPWAMSFDVLGVSVFIEALIFVLILIVGLVYAWRKGALEWS</sequence>
<reference key="1">
    <citation type="journal article" date="1997" name="Plant Sci.">
        <title>Cloning and transcription analysis of the ndhC - ndhK - ndhJ genes of lupin plastid DNA.</title>
        <authorList>
            <person name="Oczkowski M."/>
            <person name="Paszkiewicz J.M."/>
            <person name="Piatyszek M."/>
            <person name="Augustyniak H."/>
        </authorList>
    </citation>
    <scope>NUCLEOTIDE SEQUENCE [GENOMIC DNA]</scope>
    <source>
        <strain>cv. Topaz</strain>
        <tissue>Leaf</tissue>
    </source>
</reference>